<protein>
    <recommendedName>
        <fullName>Uncharacterized protein UL116</fullName>
    </recommendedName>
</protein>
<dbReference type="EMBL" id="AY446894">
    <property type="protein sequence ID" value="AAR31660.1"/>
    <property type="molecule type" value="Genomic_DNA"/>
</dbReference>
<dbReference type="RefSeq" id="YP_081556.1">
    <property type="nucleotide sequence ID" value="NC_006273.2"/>
</dbReference>
<dbReference type="PDB" id="9DIX">
    <property type="method" value="EM"/>
    <property type="resolution" value="3.51 A"/>
    <property type="chains" value="C/F=25-313"/>
</dbReference>
<dbReference type="PDB" id="9DIY">
    <property type="method" value="EM"/>
    <property type="resolution" value="5.36 A"/>
    <property type="chains" value="C=25-313"/>
</dbReference>
<dbReference type="PDBsum" id="9DIX"/>
<dbReference type="PDBsum" id="9DIY"/>
<dbReference type="SMR" id="Q6SW34"/>
<dbReference type="GlyCosmos" id="Q6SW34">
    <property type="glycosylation" value="14 sites, No reported glycans"/>
</dbReference>
<dbReference type="DNASU" id="3077556"/>
<dbReference type="GeneID" id="3077556"/>
<dbReference type="KEGG" id="vg:3077556"/>
<dbReference type="Proteomes" id="UP000000938">
    <property type="component" value="Segment"/>
</dbReference>
<feature type="signal peptide" evidence="1">
    <location>
        <begin position="1"/>
        <end position="24"/>
    </location>
</feature>
<feature type="chain" id="PRO_0000416713" description="Uncharacterized protein UL116">
    <location>
        <begin position="25"/>
        <end position="313"/>
    </location>
</feature>
<feature type="region of interest" description="Disordered" evidence="2">
    <location>
        <begin position="47"/>
        <end position="73"/>
    </location>
</feature>
<feature type="region of interest" description="Disordered" evidence="2">
    <location>
        <begin position="90"/>
        <end position="117"/>
    </location>
</feature>
<feature type="compositionally biased region" description="Low complexity" evidence="2">
    <location>
        <begin position="90"/>
        <end position="114"/>
    </location>
</feature>
<feature type="glycosylation site" description="N-linked (GlcNAc...) asparagine; by host" evidence="1">
    <location>
        <position position="28"/>
    </location>
</feature>
<feature type="glycosylation site" description="N-linked (GlcNAc...) asparagine; by host" evidence="1">
    <location>
        <position position="43"/>
    </location>
</feature>
<feature type="glycosylation site" description="N-linked (GlcNAc...) asparagine; by host" evidence="1">
    <location>
        <position position="57"/>
    </location>
</feature>
<feature type="glycosylation site" description="N-linked (GlcNAc...) asparagine; by host" evidence="1">
    <location>
        <position position="77"/>
    </location>
</feature>
<feature type="glycosylation site" description="N-linked (GlcNAc...) asparagine; by host" evidence="1">
    <location>
        <position position="101"/>
    </location>
</feature>
<feature type="glycosylation site" description="N-linked (GlcNAc...) asparagine; by host" evidence="1">
    <location>
        <position position="102"/>
    </location>
</feature>
<feature type="glycosylation site" description="N-linked (GlcNAc...) asparagine; by host" evidence="1">
    <location>
        <position position="109"/>
    </location>
</feature>
<feature type="glycosylation site" description="N-linked (GlcNAc...) asparagine; by host" evidence="1">
    <location>
        <position position="149"/>
    </location>
</feature>
<feature type="glycosylation site" description="N-linked (GlcNAc...) asparagine; by host" evidence="1">
    <location>
        <position position="168"/>
    </location>
</feature>
<feature type="glycosylation site" description="N-linked (GlcNAc...) asparagine; by host" evidence="1">
    <location>
        <position position="215"/>
    </location>
</feature>
<feature type="glycosylation site" description="N-linked (GlcNAc...) asparagine; by host" evidence="1">
    <location>
        <position position="222"/>
    </location>
</feature>
<feature type="glycosylation site" description="N-linked (GlcNAc...) asparagine; by host" evidence="1">
    <location>
        <position position="251"/>
    </location>
</feature>
<feature type="glycosylation site" description="N-linked (GlcNAc...) asparagine; by host" evidence="1">
    <location>
        <position position="254"/>
    </location>
</feature>
<feature type="glycosylation site" description="N-linked (GlcNAc...) asparagine; by host" evidence="1">
    <location>
        <position position="267"/>
    </location>
</feature>
<name>UL116_HCMVM</name>
<keyword id="KW-0002">3D-structure</keyword>
<keyword id="KW-0325">Glycoprotein</keyword>
<keyword id="KW-1185">Reference proteome</keyword>
<keyword id="KW-0732">Signal</keyword>
<accession>Q6SW34</accession>
<accession>D2K3R6</accession>
<sequence>MKRRRRWRGWLLFLALCFCLLCEAVETNATTVTSTTAAAATTNTTVATTGTTTTSPNVTSTTSNTVTTPTTVSSVSNLTSSATSILISTSTVSGTRNTRNNNTTTIGTNATSPSSSVSILTTVTPAATSTTSNNGDVTSDYTPTFDLENITTTRAPTRPPAQDLCSHNLSIILYEEESQSSVDIAVDEEEPELEDDDEYDELWFPLYFEAECNLNYTLQYVNHSCDYSVRQSSVSFPPWRDIDSVTFVPRNLSNCSAHGLAVIVAGNQTWYVNPFSLAHLLDAIYNVLGIEDLSANFWRQLAPYRHTLIVPQT</sequence>
<evidence type="ECO:0000255" key="1"/>
<evidence type="ECO:0000256" key="2">
    <source>
        <dbReference type="SAM" id="MobiDB-lite"/>
    </source>
</evidence>
<evidence type="ECO:0000305" key="3"/>
<gene>
    <name type="primary">UL116</name>
</gene>
<organismHost>
    <name type="scientific">Homo sapiens</name>
    <name type="common">Human</name>
    <dbReference type="NCBI Taxonomy" id="9606"/>
</organismHost>
<comment type="similarity">
    <text evidence="3">Belongs to the HHV-5 US34A protein family.</text>
</comment>
<proteinExistence type="evidence at protein level"/>
<reference key="1">
    <citation type="journal article" date="2004" name="J. Gen. Virol.">
        <title>Genetic content of wild-type human cytomegalovirus.</title>
        <authorList>
            <person name="Dolan A."/>
            <person name="Cunningham C."/>
            <person name="Hector R.D."/>
            <person name="Hassan-Walker A.F."/>
            <person name="Lee L."/>
            <person name="Addison C."/>
            <person name="Dargan D.J."/>
            <person name="McGeoch D.J."/>
            <person name="Gatherer D."/>
            <person name="Emery V.C."/>
            <person name="Griffiths P.D."/>
            <person name="Sinzger C."/>
            <person name="McSharry B.P."/>
            <person name="Wilkinson G.W.G."/>
            <person name="Davison A.J."/>
        </authorList>
    </citation>
    <scope>NUCLEOTIDE SEQUENCE [LARGE SCALE GENOMIC DNA]</scope>
    <source>
        <strain>Merlin</strain>
    </source>
</reference>
<organism>
    <name type="scientific">Human cytomegalovirus (strain Merlin)</name>
    <name type="common">HHV-5</name>
    <name type="synonym">Human herpesvirus 5</name>
    <dbReference type="NCBI Taxonomy" id="295027"/>
    <lineage>
        <taxon>Viruses</taxon>
        <taxon>Duplodnaviria</taxon>
        <taxon>Heunggongvirae</taxon>
        <taxon>Peploviricota</taxon>
        <taxon>Herviviricetes</taxon>
        <taxon>Herpesvirales</taxon>
        <taxon>Orthoherpesviridae</taxon>
        <taxon>Betaherpesvirinae</taxon>
        <taxon>Cytomegalovirus</taxon>
        <taxon>Cytomegalovirus humanbeta5</taxon>
        <taxon>Human cytomegalovirus</taxon>
    </lineage>
</organism>